<gene>
    <name evidence="24" type="primary">LAMTOR2</name>
    <name type="synonym">MAPBPIP</name>
    <name type="synonym">ROBLD3</name>
    <name type="ORF">HSPC003</name>
</gene>
<feature type="chain" id="PRO_0000220960" description="Ragulator complex protein LAMTOR2">
    <location>
        <begin position="1"/>
        <end position="125"/>
    </location>
</feature>
<feature type="region of interest" description="Required for location at endosomes" evidence="1">
    <location>
        <begin position="57"/>
        <end position="70"/>
    </location>
</feature>
<feature type="splice variant" id="VSP_040980" description="In isoform 3." evidence="22">
    <location>
        <begin position="78"/>
        <end position="107"/>
    </location>
</feature>
<feature type="splice variant" id="VSP_036543" description="In isoform 2." evidence="23">
    <original>QALVQYLEEPLTQVAAS</original>
    <variation>VCGTDLCSPSAGPGFGAVPGGAPHPSGGILTALVEAGVRKEK</variation>
    <location>
        <begin position="109"/>
        <end position="125"/>
    </location>
</feature>
<feature type="mutagenesis site" description="In M6 mutant; impaired assembly of the Ragulator complex." evidence="15">
    <original>DAR</original>
    <variation>AAA</variation>
    <location>
        <begin position="41"/>
        <end position="43"/>
    </location>
</feature>
<feature type="mutagenesis site" description="In M7 mutant; impaired association with Rag GTPases." evidence="15">
    <original>VTAA</original>
    <variation>DTAD</variation>
    <location>
        <begin position="44"/>
        <end position="47"/>
    </location>
</feature>
<feature type="helix" evidence="47">
    <location>
        <begin position="4"/>
        <end position="12"/>
    </location>
</feature>
<feature type="strand" evidence="49">
    <location>
        <begin position="16"/>
        <end position="18"/>
    </location>
</feature>
<feature type="strand" evidence="47">
    <location>
        <begin position="19"/>
        <end position="25"/>
    </location>
</feature>
<feature type="strand" evidence="48">
    <location>
        <begin position="27"/>
        <end position="29"/>
    </location>
</feature>
<feature type="strand" evidence="47">
    <location>
        <begin position="31"/>
        <end position="36"/>
    </location>
</feature>
<feature type="strand" evidence="45">
    <location>
        <begin position="38"/>
        <end position="40"/>
    </location>
</feature>
<feature type="helix" evidence="47">
    <location>
        <begin position="42"/>
        <end position="60"/>
    </location>
</feature>
<feature type="turn" evidence="46">
    <location>
        <begin position="64"/>
        <end position="66"/>
    </location>
</feature>
<feature type="strand" evidence="47">
    <location>
        <begin position="71"/>
        <end position="76"/>
    </location>
</feature>
<feature type="strand" evidence="47">
    <location>
        <begin position="79"/>
        <end position="86"/>
    </location>
</feature>
<feature type="strand" evidence="47">
    <location>
        <begin position="89"/>
        <end position="95"/>
    </location>
</feature>
<feature type="strand" evidence="49">
    <location>
        <begin position="97"/>
        <end position="99"/>
    </location>
</feature>
<feature type="helix" evidence="47">
    <location>
        <begin position="101"/>
        <end position="122"/>
    </location>
</feature>
<protein>
    <recommendedName>
        <fullName evidence="23">Ragulator complex protein LAMTOR2</fullName>
    </recommendedName>
    <alternativeName>
        <fullName>Endosomal adaptor protein p14</fullName>
    </alternativeName>
    <alternativeName>
        <fullName>Late endosomal/lysosomal Mp1-interacting protein</fullName>
    </alternativeName>
    <alternativeName>
        <fullName>Late endosomal/lysosomal adaptor and MAPK and MTOR activator 2</fullName>
    </alternativeName>
    <alternativeName>
        <fullName>Mitogen-activated protein-binding protein-interacting protein</fullName>
        <shortName>MAPBP-interacting protein</shortName>
    </alternativeName>
    <alternativeName>
        <fullName>Roadblock domain-containing protein 3</fullName>
    </alternativeName>
</protein>
<name>LTOR2_HUMAN</name>
<organism>
    <name type="scientific">Homo sapiens</name>
    <name type="common">Human</name>
    <dbReference type="NCBI Taxonomy" id="9606"/>
    <lineage>
        <taxon>Eukaryota</taxon>
        <taxon>Metazoa</taxon>
        <taxon>Chordata</taxon>
        <taxon>Craniata</taxon>
        <taxon>Vertebrata</taxon>
        <taxon>Euteleostomi</taxon>
        <taxon>Mammalia</taxon>
        <taxon>Eutheria</taxon>
        <taxon>Euarchontoglires</taxon>
        <taxon>Primates</taxon>
        <taxon>Haplorrhini</taxon>
        <taxon>Catarrhini</taxon>
        <taxon>Hominidae</taxon>
        <taxon>Homo</taxon>
    </lineage>
</organism>
<sequence>MLRPKALTQVLSQANTGGVQSTLLLNNEGSLLAYSGYGDTDARVTAAIASNIWAAYDRNGNQAFNEDNLKFILMDCMEGRVAITRVANLLLCMYAKETVGFGMLKAKAQALVQYLEEPLTQVAAS</sequence>
<comment type="function">
    <text evidence="2 5 6 9 10 11 12 14">As part of the Ragulator complex it is involved in amino acid sensing and activation of mTORC1, a signaling complex promoting cell growth in response to growth factors, energy levels, and amino acids (PubMed:20381137, PubMed:28935770, PubMed:29107538, PubMed:29123114, PubMed:29158492). Activated by amino acids through a mechanism involving the lysosomal V-ATPase, the Ragulator plays a dual role for the small GTPases Rag (RagA/RRAGA, RagB/RRAGB, RagC/RRAGC and/or RagD/RRAGD): it (1) acts as a guanine nucleotide exchange factor (GEF), activating the small GTPases Rag and (2) mediates recruitment of Rag GTPases to the lysosome membrane (PubMed:22980980, PubMed:28935770, PubMed:29107538, PubMed:29123114, PubMed:29158492, PubMed:30181260). Activated Ragulator and Rag GTPases function as a scaffold recruiting mTORC1 to lysosomes where it is in turn activated (PubMed:22980980, PubMed:29107538, PubMed:29123114, PubMed:29158492). Adapter protein that enhances the efficiency of the MAP kinase cascade facilitating the activation of MAPK2 (By similarity).</text>
</comment>
<comment type="subunit">
    <text evidence="2 5 6 7 8 9 10 11 12 13 15 16 17 18 19 20 21">Part of the Ragulator complex composed of LAMTOR1, LAMTOR2, LAMTOR3, LAMTOR4 and LAMTOR5 (PubMed:20381137, PubMed:22980980, PubMed:28935770, PubMed:29107538, PubMed:29123114, PubMed:29158492, PubMed:29285400, PubMed:31601708, PubMed:32868926, PubMed:35338845, PubMed:36103527, PubMed:36697823). LAMTOR4 and LAMTOR5 form a heterodimer that interacts, through LAMTOR1, with a LAMTOR2, LAMTOR3 heterodimer (PubMed:20381137, PubMed:22980980). Interacts with LAMTOR1 and LAMTOR3; the interaction is direct (PubMed:20381137, PubMed:22980980). The Ragulator complex interacts with both the mTORC1 complex and heterodimers constituted of the Rag GTPases RagA/RRAGA, RagB/RRAGB, RagC/RRAGC and RagD/RRAGD; regulated by amino acid availability (PubMed:20381137, PubMed:22980980, PubMed:32868926). The Ragulator complex interacts with SLC38A9; the probable amino acid sensor (PubMed:25561175, PubMed:25567906). Interacts with MAPK1 and MAP2K1 (By similarity). Component of the lysosomal folliculin complex (LFC), composed of FLCN, FNIP1 (or FNIP2), RagA/RRAGA or RagB/RRAGB GDP-bound, RagC/RRAGC or RagD/RRAGD GTP-bound, and Ragulator (PubMed:31672913, PubMed:31704029, PubMed:32868926).</text>
</comment>
<comment type="interaction">
    <interactant intactId="EBI-2643704">
        <id>Q9Y2Q5</id>
    </interactant>
    <interactant intactId="EBI-745725">
        <id>Q9NWV8</id>
        <label>BABAM1</label>
    </interactant>
    <organismsDiffer>false</organismsDiffer>
    <experiments>2</experiments>
</comment>
<comment type="interaction">
    <interactant intactId="EBI-2643704">
        <id>Q9Y2Q5</id>
    </interactant>
    <interactant intactId="EBI-10193358">
        <id>Q96GS4</id>
        <label>BORCS6</label>
    </interactant>
    <organismsDiffer>false</organismsDiffer>
    <experiments>7</experiments>
</comment>
<comment type="interaction">
    <interactant intactId="EBI-2643704">
        <id>Q9Y2Q5</id>
    </interactant>
    <interactant intactId="EBI-715385">
        <id>Q6IAA8</id>
        <label>LAMTOR1</label>
    </interactant>
    <organismsDiffer>false</organismsDiffer>
    <experiments>23</experiments>
</comment>
<comment type="interaction">
    <interactant intactId="EBI-2643704">
        <id>Q9Y2Q5</id>
    </interactant>
    <interactant intactId="EBI-1038192">
        <id>Q9UHA4</id>
        <label>LAMTOR3</label>
    </interactant>
    <organismsDiffer>false</organismsDiffer>
    <experiments>40</experiments>
</comment>
<comment type="interaction">
    <interactant intactId="EBI-2643704">
        <id>Q9Y2Q5</id>
    </interactant>
    <interactant intactId="EBI-9978316">
        <id>Q8NBW4</id>
        <label>SLC38A9</label>
    </interactant>
    <organismsDiffer>false</organismsDiffer>
    <experiments>5</experiments>
</comment>
<comment type="subcellular location">
    <subcellularLocation>
        <location evidence="2">Late endosome membrane</location>
        <topology evidence="2">Peripheral membrane protein</topology>
        <orientation evidence="2">Cytoplasmic side</orientation>
    </subcellularLocation>
    <subcellularLocation>
        <location evidence="4">Lysosome membrane</location>
        <topology evidence="2">Peripheral membrane protein</topology>
        <orientation evidence="2">Cytoplasmic side</orientation>
    </subcellularLocation>
    <text evidence="2">Recruited to lysosome and endosome membranes by LAMTOR1.</text>
</comment>
<comment type="alternative products">
    <event type="alternative splicing"/>
    <isoform>
        <id>Q9Y2Q5-1</id>
        <name>1</name>
        <sequence type="displayed"/>
    </isoform>
    <isoform>
        <id>Q9Y2Q5-2</id>
        <name>2</name>
        <sequence type="described" ref="VSP_036543"/>
    </isoform>
    <isoform>
        <id>Q9Y2Q5-3</id>
        <name>3</name>
        <sequence type="described" ref="VSP_040980"/>
    </isoform>
</comment>
<comment type="disease" evidence="3">
    <disease id="DI-01810">
        <name>Immunodeficiency due to defect in MAPBP-interacting protein</name>
        <acronym>ID-MAPBPIP</acronym>
        <description>This form of primary immunodeficiency syndrome includes congenital neutropenia, partial albinism, short stature and B-cell and cytotoxic T-cell deficiency.</description>
        <dbReference type="MIM" id="610798"/>
    </disease>
    <text>The disease is caused by variants affecting the gene represented in this entry.</text>
</comment>
<comment type="similarity">
    <text evidence="23">Belongs to the GAMAD family.</text>
</comment>
<comment type="online information" name="MAPBPIPbase">
    <link uri="https://databases.lovd.nl/shared/genes/LAMTOR2"/>
    <text>ROBLD3 mutation db</text>
</comment>
<reference key="1">
    <citation type="journal article" date="2000" name="Genome Res.">
        <title>Cloning and functional analysis of cDNAs with open reading frames for 300 previously undefined genes expressed in CD34+ hematopoietic stem/progenitor cells.</title>
        <authorList>
            <person name="Zhang Q.-H."/>
            <person name="Ye M."/>
            <person name="Wu X.-Y."/>
            <person name="Ren S.-X."/>
            <person name="Zhao M."/>
            <person name="Zhao C.-J."/>
            <person name="Fu G."/>
            <person name="Shen Y."/>
            <person name="Fan H.-Y."/>
            <person name="Lu G."/>
            <person name="Zhong M."/>
            <person name="Xu X.-R."/>
            <person name="Han Z.-G."/>
            <person name="Zhang J.-W."/>
            <person name="Tao J."/>
            <person name="Huang Q.-H."/>
            <person name="Zhou J."/>
            <person name="Hu G.-X."/>
            <person name="Gu J."/>
            <person name="Chen S.-J."/>
            <person name="Chen Z."/>
        </authorList>
    </citation>
    <scope>NUCLEOTIDE SEQUENCE [LARGE SCALE MRNA] (ISOFORM 1)</scope>
    <source>
        <tissue>Umbilical cord blood</tissue>
    </source>
</reference>
<reference key="2">
    <citation type="journal article" date="2004" name="Nat. Genet.">
        <title>Complete sequencing and characterization of 21,243 full-length human cDNAs.</title>
        <authorList>
            <person name="Ota T."/>
            <person name="Suzuki Y."/>
            <person name="Nishikawa T."/>
            <person name="Otsuki T."/>
            <person name="Sugiyama T."/>
            <person name="Irie R."/>
            <person name="Wakamatsu A."/>
            <person name="Hayashi K."/>
            <person name="Sato H."/>
            <person name="Nagai K."/>
            <person name="Kimura K."/>
            <person name="Makita H."/>
            <person name="Sekine M."/>
            <person name="Obayashi M."/>
            <person name="Nishi T."/>
            <person name="Shibahara T."/>
            <person name="Tanaka T."/>
            <person name="Ishii S."/>
            <person name="Yamamoto J."/>
            <person name="Saito K."/>
            <person name="Kawai Y."/>
            <person name="Isono Y."/>
            <person name="Nakamura Y."/>
            <person name="Nagahari K."/>
            <person name="Murakami K."/>
            <person name="Yasuda T."/>
            <person name="Iwayanagi T."/>
            <person name="Wagatsuma M."/>
            <person name="Shiratori A."/>
            <person name="Sudo H."/>
            <person name="Hosoiri T."/>
            <person name="Kaku Y."/>
            <person name="Kodaira H."/>
            <person name="Kondo H."/>
            <person name="Sugawara M."/>
            <person name="Takahashi M."/>
            <person name="Kanda K."/>
            <person name="Yokoi T."/>
            <person name="Furuya T."/>
            <person name="Kikkawa E."/>
            <person name="Omura Y."/>
            <person name="Abe K."/>
            <person name="Kamihara K."/>
            <person name="Katsuta N."/>
            <person name="Sato K."/>
            <person name="Tanikawa M."/>
            <person name="Yamazaki M."/>
            <person name="Ninomiya K."/>
            <person name="Ishibashi T."/>
            <person name="Yamashita H."/>
            <person name="Murakawa K."/>
            <person name="Fujimori K."/>
            <person name="Tanai H."/>
            <person name="Kimata M."/>
            <person name="Watanabe M."/>
            <person name="Hiraoka S."/>
            <person name="Chiba Y."/>
            <person name="Ishida S."/>
            <person name="Ono Y."/>
            <person name="Takiguchi S."/>
            <person name="Watanabe S."/>
            <person name="Yosida M."/>
            <person name="Hotuta T."/>
            <person name="Kusano J."/>
            <person name="Kanehori K."/>
            <person name="Takahashi-Fujii A."/>
            <person name="Hara H."/>
            <person name="Tanase T.-O."/>
            <person name="Nomura Y."/>
            <person name="Togiya S."/>
            <person name="Komai F."/>
            <person name="Hara R."/>
            <person name="Takeuchi K."/>
            <person name="Arita M."/>
            <person name="Imose N."/>
            <person name="Musashino K."/>
            <person name="Yuuki H."/>
            <person name="Oshima A."/>
            <person name="Sasaki N."/>
            <person name="Aotsuka S."/>
            <person name="Yoshikawa Y."/>
            <person name="Matsunawa H."/>
            <person name="Ichihara T."/>
            <person name="Shiohata N."/>
            <person name="Sano S."/>
            <person name="Moriya S."/>
            <person name="Momiyama H."/>
            <person name="Satoh N."/>
            <person name="Takami S."/>
            <person name="Terashima Y."/>
            <person name="Suzuki O."/>
            <person name="Nakagawa S."/>
            <person name="Senoh A."/>
            <person name="Mizoguchi H."/>
            <person name="Goto Y."/>
            <person name="Shimizu F."/>
            <person name="Wakebe H."/>
            <person name="Hishigaki H."/>
            <person name="Watanabe T."/>
            <person name="Sugiyama A."/>
            <person name="Takemoto M."/>
            <person name="Kawakami B."/>
            <person name="Yamazaki M."/>
            <person name="Watanabe K."/>
            <person name="Kumagai A."/>
            <person name="Itakura S."/>
            <person name="Fukuzumi Y."/>
            <person name="Fujimori Y."/>
            <person name="Komiyama M."/>
            <person name="Tashiro H."/>
            <person name="Tanigami A."/>
            <person name="Fujiwara T."/>
            <person name="Ono T."/>
            <person name="Yamada K."/>
            <person name="Fujii Y."/>
            <person name="Ozaki K."/>
            <person name="Hirao M."/>
            <person name="Ohmori Y."/>
            <person name="Kawabata A."/>
            <person name="Hikiji T."/>
            <person name="Kobatake N."/>
            <person name="Inagaki H."/>
            <person name="Ikema Y."/>
            <person name="Okamoto S."/>
            <person name="Okitani R."/>
            <person name="Kawakami T."/>
            <person name="Noguchi S."/>
            <person name="Itoh T."/>
            <person name="Shigeta K."/>
            <person name="Senba T."/>
            <person name="Matsumura K."/>
            <person name="Nakajima Y."/>
            <person name="Mizuno T."/>
            <person name="Morinaga M."/>
            <person name="Sasaki M."/>
            <person name="Togashi T."/>
            <person name="Oyama M."/>
            <person name="Hata H."/>
            <person name="Watanabe M."/>
            <person name="Komatsu T."/>
            <person name="Mizushima-Sugano J."/>
            <person name="Satoh T."/>
            <person name="Shirai Y."/>
            <person name="Takahashi Y."/>
            <person name="Nakagawa K."/>
            <person name="Okumura K."/>
            <person name="Nagase T."/>
            <person name="Nomura N."/>
            <person name="Kikuchi H."/>
            <person name="Masuho Y."/>
            <person name="Yamashita R."/>
            <person name="Nakai K."/>
            <person name="Yada T."/>
            <person name="Nakamura Y."/>
            <person name="Ohara O."/>
            <person name="Isogai T."/>
            <person name="Sugano S."/>
        </authorList>
    </citation>
    <scope>NUCLEOTIDE SEQUENCE [LARGE SCALE MRNA] (ISOFORM 3)</scope>
</reference>
<reference key="3">
    <citation type="journal article" date="2006" name="Nature">
        <title>The DNA sequence and biological annotation of human chromosome 1.</title>
        <authorList>
            <person name="Gregory S.G."/>
            <person name="Barlow K.F."/>
            <person name="McLay K.E."/>
            <person name="Kaul R."/>
            <person name="Swarbreck D."/>
            <person name="Dunham A."/>
            <person name="Scott C.E."/>
            <person name="Howe K.L."/>
            <person name="Woodfine K."/>
            <person name="Spencer C.C.A."/>
            <person name="Jones M.C."/>
            <person name="Gillson C."/>
            <person name="Searle S."/>
            <person name="Zhou Y."/>
            <person name="Kokocinski F."/>
            <person name="McDonald L."/>
            <person name="Evans R."/>
            <person name="Phillips K."/>
            <person name="Atkinson A."/>
            <person name="Cooper R."/>
            <person name="Jones C."/>
            <person name="Hall R.E."/>
            <person name="Andrews T.D."/>
            <person name="Lloyd C."/>
            <person name="Ainscough R."/>
            <person name="Almeida J.P."/>
            <person name="Ambrose K.D."/>
            <person name="Anderson F."/>
            <person name="Andrew R.W."/>
            <person name="Ashwell R.I.S."/>
            <person name="Aubin K."/>
            <person name="Babbage A.K."/>
            <person name="Bagguley C.L."/>
            <person name="Bailey J."/>
            <person name="Beasley H."/>
            <person name="Bethel G."/>
            <person name="Bird C.P."/>
            <person name="Bray-Allen S."/>
            <person name="Brown J.Y."/>
            <person name="Brown A.J."/>
            <person name="Buckley D."/>
            <person name="Burton J."/>
            <person name="Bye J."/>
            <person name="Carder C."/>
            <person name="Chapman J.C."/>
            <person name="Clark S.Y."/>
            <person name="Clarke G."/>
            <person name="Clee C."/>
            <person name="Cobley V."/>
            <person name="Collier R.E."/>
            <person name="Corby N."/>
            <person name="Coville G.J."/>
            <person name="Davies J."/>
            <person name="Deadman R."/>
            <person name="Dunn M."/>
            <person name="Earthrowl M."/>
            <person name="Ellington A.G."/>
            <person name="Errington H."/>
            <person name="Frankish A."/>
            <person name="Frankland J."/>
            <person name="French L."/>
            <person name="Garner P."/>
            <person name="Garnett J."/>
            <person name="Gay L."/>
            <person name="Ghori M.R.J."/>
            <person name="Gibson R."/>
            <person name="Gilby L.M."/>
            <person name="Gillett W."/>
            <person name="Glithero R.J."/>
            <person name="Grafham D.V."/>
            <person name="Griffiths C."/>
            <person name="Griffiths-Jones S."/>
            <person name="Grocock R."/>
            <person name="Hammond S."/>
            <person name="Harrison E.S.I."/>
            <person name="Hart E."/>
            <person name="Haugen E."/>
            <person name="Heath P.D."/>
            <person name="Holmes S."/>
            <person name="Holt K."/>
            <person name="Howden P.J."/>
            <person name="Hunt A.R."/>
            <person name="Hunt S.E."/>
            <person name="Hunter G."/>
            <person name="Isherwood J."/>
            <person name="James R."/>
            <person name="Johnson C."/>
            <person name="Johnson D."/>
            <person name="Joy A."/>
            <person name="Kay M."/>
            <person name="Kershaw J.K."/>
            <person name="Kibukawa M."/>
            <person name="Kimberley A.M."/>
            <person name="King A."/>
            <person name="Knights A.J."/>
            <person name="Lad H."/>
            <person name="Laird G."/>
            <person name="Lawlor S."/>
            <person name="Leongamornlert D.A."/>
            <person name="Lloyd D.M."/>
            <person name="Loveland J."/>
            <person name="Lovell J."/>
            <person name="Lush M.J."/>
            <person name="Lyne R."/>
            <person name="Martin S."/>
            <person name="Mashreghi-Mohammadi M."/>
            <person name="Matthews L."/>
            <person name="Matthews N.S.W."/>
            <person name="McLaren S."/>
            <person name="Milne S."/>
            <person name="Mistry S."/>
            <person name="Moore M.J.F."/>
            <person name="Nickerson T."/>
            <person name="O'Dell C.N."/>
            <person name="Oliver K."/>
            <person name="Palmeiri A."/>
            <person name="Palmer S.A."/>
            <person name="Parker A."/>
            <person name="Patel D."/>
            <person name="Pearce A.V."/>
            <person name="Peck A.I."/>
            <person name="Pelan S."/>
            <person name="Phelps K."/>
            <person name="Phillimore B.J."/>
            <person name="Plumb R."/>
            <person name="Rajan J."/>
            <person name="Raymond C."/>
            <person name="Rouse G."/>
            <person name="Saenphimmachak C."/>
            <person name="Sehra H.K."/>
            <person name="Sheridan E."/>
            <person name="Shownkeen R."/>
            <person name="Sims S."/>
            <person name="Skuce C.D."/>
            <person name="Smith M."/>
            <person name="Steward C."/>
            <person name="Subramanian S."/>
            <person name="Sycamore N."/>
            <person name="Tracey A."/>
            <person name="Tromans A."/>
            <person name="Van Helmond Z."/>
            <person name="Wall M."/>
            <person name="Wallis J.M."/>
            <person name="White S."/>
            <person name="Whitehead S.L."/>
            <person name="Wilkinson J.E."/>
            <person name="Willey D.L."/>
            <person name="Williams H."/>
            <person name="Wilming L."/>
            <person name="Wray P.W."/>
            <person name="Wu Z."/>
            <person name="Coulson A."/>
            <person name="Vaudin M."/>
            <person name="Sulston J.E."/>
            <person name="Durbin R.M."/>
            <person name="Hubbard T."/>
            <person name="Wooster R."/>
            <person name="Dunham I."/>
            <person name="Carter N.P."/>
            <person name="McVean G."/>
            <person name="Ross M.T."/>
            <person name="Harrow J."/>
            <person name="Olson M.V."/>
            <person name="Beck S."/>
            <person name="Rogers J."/>
            <person name="Bentley D.R."/>
        </authorList>
    </citation>
    <scope>NUCLEOTIDE SEQUENCE [LARGE SCALE GENOMIC DNA]</scope>
</reference>
<reference key="4">
    <citation type="journal article" date="2004" name="Genome Res.">
        <title>The status, quality, and expansion of the NIH full-length cDNA project: the Mammalian Gene Collection (MGC).</title>
        <authorList>
            <consortium name="The MGC Project Team"/>
        </authorList>
    </citation>
    <scope>NUCLEOTIDE SEQUENCE [LARGE SCALE MRNA] (ISOFORM 1)</scope>
    <source>
        <tissue>Lung</tissue>
    </source>
</reference>
<reference key="5">
    <citation type="journal article" date="2007" name="Traffic">
        <title>Integral and associated lysosomal membrane proteins.</title>
        <authorList>
            <person name="Schroeder B."/>
            <person name="Wrocklage C."/>
            <person name="Pan C."/>
            <person name="Jaeger R."/>
            <person name="Koesters B."/>
            <person name="Schaefer H."/>
            <person name="Elsaesser H.-P."/>
            <person name="Mann M."/>
            <person name="Hasilik A."/>
        </authorList>
    </citation>
    <scope>SUBCELLULAR LOCATION [LARGE SCALE ANALYSIS]</scope>
    <source>
        <tissue>Placenta</tissue>
    </source>
</reference>
<reference key="6">
    <citation type="journal article" date="2007" name="Nat. Med.">
        <title>A novel human primary immunodeficiency syndrome caused by deficiency of the endosomal adaptor protein p14.</title>
        <authorList>
            <person name="Bohn G."/>
            <person name="Allroth A."/>
            <person name="Brandes G."/>
            <person name="Thiel J."/>
            <person name="Glocker E."/>
            <person name="Schaeffer A.A."/>
            <person name="Rathinam C."/>
            <person name="Taub N."/>
            <person name="Teis D."/>
            <person name="Zeidler C."/>
            <person name="Dewey R.A."/>
            <person name="Geffers R."/>
            <person name="Buer J."/>
            <person name="Huber L.A."/>
            <person name="Welte K."/>
            <person name="Grimbacher B."/>
            <person name="Klein C."/>
        </authorList>
    </citation>
    <scope>INVOLVEMENT IN IMMUNODEFICIENCY DUE TO DEFECT IN MAPBP-INTERACTING PROTEIN</scope>
</reference>
<reference key="7">
    <citation type="journal article" date="2010" name="Cell">
        <title>Ragulator-Rag complex targets mTORC1 to the lysosomal surface and is necessary for its activation by amino acids.</title>
        <authorList>
            <person name="Sancak Y."/>
            <person name="Bar-Peled L."/>
            <person name="Zoncu R."/>
            <person name="Markhard A.L."/>
            <person name="Nada S."/>
            <person name="Sabatini D.M."/>
        </authorList>
    </citation>
    <scope>FUNCTION</scope>
    <scope>IDENTIFICATION IN RAGULATOR COMPLEX</scope>
</reference>
<reference key="8">
    <citation type="journal article" date="2011" name="BMC Syst. Biol.">
        <title>Initial characterization of the human central proteome.</title>
        <authorList>
            <person name="Burkard T.R."/>
            <person name="Planyavsky M."/>
            <person name="Kaupe I."/>
            <person name="Breitwieser F.P."/>
            <person name="Buerckstuemmer T."/>
            <person name="Bennett K.L."/>
            <person name="Superti-Furga G."/>
            <person name="Colinge J."/>
        </authorList>
    </citation>
    <scope>IDENTIFICATION BY MASS SPECTROMETRY [LARGE SCALE ANALYSIS]</scope>
</reference>
<reference key="9">
    <citation type="journal article" date="2012" name="Cell">
        <title>Ragulator is a GEF for the Rag GTPases that signal amino acid levels to mTORC1.</title>
        <authorList>
            <person name="Bar-Peled L."/>
            <person name="Schweitzer L.D."/>
            <person name="Zoncu R."/>
            <person name="Sabatini D.M."/>
        </authorList>
    </citation>
    <scope>FUNCTION IN MTORC1 SIGNALING</scope>
    <scope>IDENTIFICATION IN RAGULATOR COMPLEX</scope>
    <scope>INTERACTION WITH MTORC1 COMPLEX AND RAG GTPASES</scope>
</reference>
<reference key="10">
    <citation type="journal article" date="2014" name="J. Proteomics">
        <title>An enzyme assisted RP-RPLC approach for in-depth analysis of human liver phosphoproteome.</title>
        <authorList>
            <person name="Bian Y."/>
            <person name="Song C."/>
            <person name="Cheng K."/>
            <person name="Dong M."/>
            <person name="Wang F."/>
            <person name="Huang J."/>
            <person name="Sun D."/>
            <person name="Wang L."/>
            <person name="Ye M."/>
            <person name="Zou H."/>
        </authorList>
    </citation>
    <scope>IDENTIFICATION BY MASS SPECTROMETRY [LARGE SCALE ANALYSIS]</scope>
    <source>
        <tissue>Liver</tissue>
    </source>
</reference>
<reference key="11">
    <citation type="journal article" date="2015" name="Nature">
        <title>SLC38A9 is a component of the lysosomal amino acid sensing machinery that controls mTORC1.</title>
        <authorList>
            <person name="Rebsamen M."/>
            <person name="Pochini L."/>
            <person name="Stasyk T."/>
            <person name="de Araujo M.E."/>
            <person name="Galluccio M."/>
            <person name="Kandasamy R.K."/>
            <person name="Snijder B."/>
            <person name="Fauster A."/>
            <person name="Rudashevskaya E.L."/>
            <person name="Bruckner M."/>
            <person name="Scorzoni S."/>
            <person name="Filipek P.A."/>
            <person name="Huber K.V."/>
            <person name="Bigenzahn J.W."/>
            <person name="Heinz L.X."/>
            <person name="Kraft C."/>
            <person name="Bennett K.L."/>
            <person name="Indiveri C."/>
            <person name="Huber L.A."/>
            <person name="Superti-Furga G."/>
        </authorList>
    </citation>
    <scope>SUBUNIT</scope>
</reference>
<reference key="12">
    <citation type="journal article" date="2015" name="Proteomics">
        <title>N-terminome analysis of the human mitochondrial proteome.</title>
        <authorList>
            <person name="Vaca Jacome A.S."/>
            <person name="Rabilloud T."/>
            <person name="Schaeffer-Reiss C."/>
            <person name="Rompais M."/>
            <person name="Ayoub D."/>
            <person name="Lane L."/>
            <person name="Bairoch A."/>
            <person name="Van Dorsselaer A."/>
            <person name="Carapito C."/>
        </authorList>
    </citation>
    <scope>IDENTIFICATION BY MASS SPECTROMETRY [LARGE SCALE ANALYSIS]</scope>
</reference>
<reference key="13">
    <citation type="journal article" date="2015" name="Science">
        <title>Metabolism. Lysosomal amino acid transporter SLC38A9 signals arginine sufficiency to mTORC1.</title>
        <authorList>
            <person name="Wang S."/>
            <person name="Tsun Z.Y."/>
            <person name="Wolfson R.L."/>
            <person name="Shen K."/>
            <person name="Wyant G.A."/>
            <person name="Plovanich M.E."/>
            <person name="Yuan E.D."/>
            <person name="Jones T.D."/>
            <person name="Chantranupong L."/>
            <person name="Comb W."/>
            <person name="Wang T."/>
            <person name="Bar-Peled L."/>
            <person name="Zoncu R."/>
            <person name="Straub C."/>
            <person name="Kim C."/>
            <person name="Park J."/>
            <person name="Sabatini B.L."/>
            <person name="Sabatini D.M."/>
        </authorList>
    </citation>
    <scope>SUBUNIT</scope>
</reference>
<reference key="14">
    <citation type="journal article" date="2018" name="Proc. Natl. Acad. Sci. U.S.A.">
        <title>Ragulator and SLC38A9 activate the Rag GTPases through noncanonical GEF mechanisms.</title>
        <authorList>
            <person name="Shen K."/>
            <person name="Sabatini D.M."/>
        </authorList>
    </citation>
    <scope>FUNCTION</scope>
</reference>
<reference evidence="29" key="15">
    <citation type="journal article" date="2017" name="Cell Discov.">
        <title>Structural insight into the Ragulator complex which anchors mTORC1 to the lysosomal membrane.</title>
        <authorList>
            <person name="Mu Z."/>
            <person name="Wang L."/>
            <person name="Deng W."/>
            <person name="Wang J."/>
            <person name="Wu G."/>
        </authorList>
    </citation>
    <scope>X-RAY CRYSTALLOGRAPHY (2.03 ANGSTROMS) OF 1-124 IN COMPLEX WITH LAMTOR1; LAMTOR3; LAMTOR4 AND LAMTOR5</scope>
    <scope>IDENTIFICATION IN RAGULATOR COMPLEX</scope>
</reference>
<reference evidence="27 28" key="16">
    <citation type="journal article" date="2017" name="Nat. Commun.">
        <title>Structural basis for Ragulator functioning as a scaffold in membrane-anchoring of Rag GTPases and mTORC1.</title>
        <authorList>
            <person name="Zhang T."/>
            <person name="Wang R."/>
            <person name="Wang Z."/>
            <person name="Wang X."/>
            <person name="Wang F."/>
            <person name="Ding J."/>
        </authorList>
    </citation>
    <scope>X-RAY CRYSTALLOGRAPHY (2.65 ANGSTROMS) IN COMPLEX WITH LAMTOR1; LAMTOR3; LAMTOR4 AND LAMTOR5</scope>
    <scope>FUNCTION</scope>
    <scope>IDENTIFICATION IN RAGULATOR COMPLEX</scope>
</reference>
<reference evidence="25 26" key="17">
    <citation type="journal article" date="2017" name="Nat. Commun.">
        <title>Structural basis for the assembly of the Ragulator-Rag GTPase complex.</title>
        <authorList>
            <person name="Yonehara R."/>
            <person name="Nada S."/>
            <person name="Nakai T."/>
            <person name="Nakai M."/>
            <person name="Kitamura A."/>
            <person name="Ogawa A."/>
            <person name="Nakatsumi H."/>
            <person name="Nakayama K.I."/>
            <person name="Li S."/>
            <person name="Standley D.M."/>
            <person name="Yamashita E."/>
            <person name="Nakagawa A."/>
            <person name="Okada M."/>
        </authorList>
    </citation>
    <scope>X-RAY CRYSTALLOGRAPHY (2.02 ANGSTROMS) IN COMPLEX WITH RRAGA; RRAGC; LAMTOR1; LAMTOR3; LAMTOR4 AND LAMTOR5</scope>
    <scope>FUNCTION</scope>
    <scope>IDENTIFICATION IN RAGULATOR COMPLEX</scope>
</reference>
<reference evidence="30" key="18">
    <citation type="journal article" date="2017" name="Mol. Cell">
        <title>Hybrid Structure of the RagA/C-Ragulator mTORC1 Activation Complex.</title>
        <authorList>
            <person name="Su M.Y."/>
            <person name="Morris K.L."/>
            <person name="Kim D.J."/>
            <person name="Fu Y."/>
            <person name="Lawrence R."/>
            <person name="Stjepanovic G."/>
            <person name="Zoncu R."/>
            <person name="Hurley J.H."/>
        </authorList>
    </citation>
    <scope>X-RAY CRYSTALLOGRAPHY (1.42 ANGSTROMS) IN COMPLEX WITH LAMTOR1; LAMTOR3; LAMTOR4 AND LAMTOR5</scope>
    <scope>FUNCTION</scope>
    <scope>IDENTIFICATION IN RAGULATOR COMPLEX</scope>
</reference>
<reference evidence="31 32" key="19">
    <citation type="journal article" date="2017" name="Science">
        <title>Crystal structure of the human lysosomal mTORC1 scaffold complex and its impact on signaling.</title>
        <authorList>
            <person name="de Araujo M.E.G."/>
            <person name="Naschberger A."/>
            <person name="Fuernrohr B.G."/>
            <person name="Stasyk T."/>
            <person name="Dunzendorfer-Matt T."/>
            <person name="Lechner S."/>
            <person name="Welti S."/>
            <person name="Kremser L."/>
            <person name="Shivalingaiah G."/>
            <person name="Offterdinger M."/>
            <person name="Lindner H.H."/>
            <person name="Huber L.A."/>
            <person name="Scheffzek K."/>
        </authorList>
    </citation>
    <scope>X-RAY CRYSTALLOGRAPHY (2.90 ANGSTROMS) OF 183-313 IN COMPLEX WITH RRAGA; RRAGC; LAMTOR1; LAMTOR3; LAMTOR4 AND LAMTOR5</scope>
    <scope>FUNCTION</scope>
    <scope>IDENTIFICATION IN RAGULATOR COMPLEX</scope>
</reference>
<reference evidence="35" key="20">
    <citation type="journal article" date="2019" name="Cell">
        <title>Cryo-EM structure of the human FLCN-FNIP2-Rag-Ragulator complex.</title>
        <authorList>
            <person name="Shen K."/>
            <person name="Rogala K.B."/>
            <person name="Chou H.T."/>
            <person name="Huang R.K."/>
            <person name="Yu Z."/>
            <person name="Sabatini D.M."/>
        </authorList>
    </citation>
    <scope>STRUCTURE BY ELECTRON MICROSCOPY (3.31 ANGSTROMS) IN COMPLEX WITH FLCN; FNIP2; RRAGA; RRAGC; LAMTOR1; LAMTOR3; LAMTOR4 AND LAMTOR5</scope>
    <scope>IDENTIFICATION IN THE LFC COMPLEX</scope>
</reference>
<reference evidence="34" key="21">
    <citation type="journal article" date="2019" name="Science">
        <title>Structural basis for the docking of mTORC1 on the lysosomal surface.</title>
        <authorList>
            <person name="Rogala K.B."/>
            <person name="Gu X."/>
            <person name="Kedir J.F."/>
            <person name="Abu-Remaileh M."/>
            <person name="Bianchi L.F."/>
            <person name="Bottino A.M.S."/>
            <person name="Dueholm R."/>
            <person name="Niehaus A."/>
            <person name="Overwijn D."/>
            <person name="Fils A.P."/>
            <person name="Zhou S.X."/>
            <person name="Leary D."/>
            <person name="Laqtom N.N."/>
            <person name="Brignole E.J."/>
            <person name="Sabatini D.M."/>
        </authorList>
    </citation>
    <scope>STRUCTURE BY ELECTRON MICROSCOPY (3.18 ANGSTROMS) IN COMPLEX WITH RRAGA; RRAGC; RPTOR; LAMTOR1; LAMTOR3; LAMTOR4 AND LAMTOR5</scope>
    <scope>IDENTIFICATION IN THE RAGULATOR COMPLEX</scope>
    <scope>MUTAGENESIS OF 41-ASP--ARG-43 AND 44-VAL--ALA-47</scope>
</reference>
<reference evidence="33" key="22">
    <citation type="journal article" date="2019" name="Science">
        <title>Structural mechanism of a Rag GTPase activation checkpoint by the lysosomal folliculin complex.</title>
        <authorList>
            <person name="Lawrence R.E."/>
            <person name="Fromm S.A."/>
            <person name="Fu Y."/>
            <person name="Yokom A.L."/>
            <person name="Kim D.J."/>
            <person name="Thelen A.M."/>
            <person name="Young L.N."/>
            <person name="Lim C.Y."/>
            <person name="Samelson A.J."/>
            <person name="Hurley J.H."/>
            <person name="Zoncu R."/>
        </authorList>
    </citation>
    <scope>STRUCTURE BY ELECTRON MICROSCOPY (3.60 ANGSTROMS) IN COMPLEX WITH FLCN; FNIP2; RRAGA; RRAGC; LAMTOR1; LAMTOR3; LAMTOR4 AND LAMTOR5</scope>
    <scope>IDENTIFICATION IN THE LFC COMPLEX</scope>
</reference>
<reference evidence="36 37" key="23">
    <citation type="journal article" date="2020" name="Nat. Struct. Mol. Biol.">
        <title>Structural mechanism for amino acid-dependent Rag GTPase nucleotide state switching by SLC38A9.</title>
        <authorList>
            <person name="Fromm S.A."/>
            <person name="Lawrence R.E."/>
            <person name="Hurley J.H."/>
        </authorList>
    </citation>
    <scope>STRUCTURE BY ELECTRON MICROSCOPY (3.20 ANGSTROMS) IN COMPLEX WITH SLC38A9; LAMTOR1; LAMTOR3; LAMTOR4; LAMTOR5 AND THE RAG GTPASES HETERODIMER (RRAGA AND RRAGC)</scope>
    <scope>SUBUNIT</scope>
</reference>
<reference evidence="38 39 40" key="24">
    <citation type="journal article" date="2022" name="Mol. Cell">
        <title>Cryo-EM structures of the human GATOR1-Rag-Ragulator complex reveal a spatial-constraint regulated GAP mechanism.</title>
        <authorList>
            <person name="Egri S.B."/>
            <person name="Ouch C."/>
            <person name="Chou H.T."/>
            <person name="Yu Z."/>
            <person name="Song K."/>
            <person name="Xu C."/>
            <person name="Shen K."/>
        </authorList>
    </citation>
    <scope>STRUCTURE BY ELECTRON MICROSCOPY (3.90 ANGSTROMS) IN COMPLEX WITH RRAGA; RRAGC; DEPDC5; NPRL2; NPRL3; LAMTOR1; LAMTOR3; LAMTOR4 AND LAMTOR5</scope>
    <scope>IDENTIFICATION IN THE RAGULATOR COMPLEX</scope>
</reference>
<reference evidence="44" key="25">
    <citation type="journal article" date="2022" name="Sci. Adv.">
        <title>Structural basis for FLCN RagC GAP activation in MiT-TFE substrate-selective mTORC1 regulation.</title>
        <authorList>
            <person name="Jansen R.M."/>
            <person name="Peruzzo R."/>
            <person name="Fromm S.A."/>
            <person name="Yokom A.L."/>
            <person name="Zoncu R."/>
            <person name="Hurley J.H."/>
        </authorList>
    </citation>
    <scope>STRUCTURE BY ELECTRON MICROSCOPY (3.53 ANGSTROMS) IN COMPLEX WITH RRAGA; RRAGC; LAMTOR1; LAMTOR3; LAMTOR4; LAMTOR5; FNIP2; FLCN AND SLC38A9</scope>
    <scope>IDENTIFICATION IN THE RAGULATOR COMPLEX</scope>
</reference>
<reference evidence="41 42 43" key="26">
    <citation type="journal article" date="2023" name="Nature">
        <title>Structure of the lysosomal mTORC1-TFEB-Rag-Ragulator megacomplex.</title>
        <authorList>
            <person name="Cui Z."/>
            <person name="Napolitano G."/>
            <person name="de Araujo M.E.G."/>
            <person name="Esposito A."/>
            <person name="Monfregola J."/>
            <person name="Huber L.A."/>
            <person name="Ballabio A."/>
            <person name="Hurley J.H."/>
        </authorList>
    </citation>
    <scope>STRUCTURE BY ELECTRON MICROSCOPY (2.90 ANGSTROMS) IN COMPLEX WITH RRAGA; RRAGC; LAMTOR1; LAMTOR3; LAMTOR4; LAMTOR5; RPTOR; MLST8; MTOR AND TFEB</scope>
    <scope>IDENTIFICATION IN THE RAGULATOR COMPLEX</scope>
</reference>
<accession>Q9Y2Q5</accession>
<accession>Q5VY97</accession>
<accession>Q5VY98</accession>
<accession>Q5VY99</accession>
<keyword id="KW-0002">3D-structure</keyword>
<keyword id="KW-0025">Alternative splicing</keyword>
<keyword id="KW-0967">Endosome</keyword>
<keyword id="KW-0458">Lysosome</keyword>
<keyword id="KW-0472">Membrane</keyword>
<keyword id="KW-1267">Proteomics identification</keyword>
<keyword id="KW-1185">Reference proteome</keyword>
<proteinExistence type="evidence at protein level"/>
<evidence type="ECO:0000250" key="1"/>
<evidence type="ECO:0000250" key="2">
    <source>
        <dbReference type="UniProtKB" id="Q9JHS3"/>
    </source>
</evidence>
<evidence type="ECO:0000269" key="3">
    <source>
    </source>
</evidence>
<evidence type="ECO:0000269" key="4">
    <source>
    </source>
</evidence>
<evidence type="ECO:0000269" key="5">
    <source>
    </source>
</evidence>
<evidence type="ECO:0000269" key="6">
    <source>
    </source>
</evidence>
<evidence type="ECO:0000269" key="7">
    <source>
    </source>
</evidence>
<evidence type="ECO:0000269" key="8">
    <source>
    </source>
</evidence>
<evidence type="ECO:0000269" key="9">
    <source>
    </source>
</evidence>
<evidence type="ECO:0000269" key="10">
    <source>
    </source>
</evidence>
<evidence type="ECO:0000269" key="11">
    <source>
    </source>
</evidence>
<evidence type="ECO:0000269" key="12">
    <source>
    </source>
</evidence>
<evidence type="ECO:0000269" key="13">
    <source>
    </source>
</evidence>
<evidence type="ECO:0000269" key="14">
    <source>
    </source>
</evidence>
<evidence type="ECO:0000269" key="15">
    <source>
    </source>
</evidence>
<evidence type="ECO:0000269" key="16">
    <source>
    </source>
</evidence>
<evidence type="ECO:0000269" key="17">
    <source>
    </source>
</evidence>
<evidence type="ECO:0000269" key="18">
    <source>
    </source>
</evidence>
<evidence type="ECO:0000269" key="19">
    <source>
    </source>
</evidence>
<evidence type="ECO:0000269" key="20">
    <source>
    </source>
</evidence>
<evidence type="ECO:0000269" key="21">
    <source>
    </source>
</evidence>
<evidence type="ECO:0000303" key="22">
    <source>
    </source>
</evidence>
<evidence type="ECO:0000305" key="23"/>
<evidence type="ECO:0000312" key="24">
    <source>
        <dbReference type="HGNC" id="HGNC:29796"/>
    </source>
</evidence>
<evidence type="ECO:0007744" key="25">
    <source>
        <dbReference type="PDB" id="5X6U"/>
    </source>
</evidence>
<evidence type="ECO:0007744" key="26">
    <source>
        <dbReference type="PDB" id="5X6V"/>
    </source>
</evidence>
<evidence type="ECO:0007744" key="27">
    <source>
        <dbReference type="PDB" id="5Y39"/>
    </source>
</evidence>
<evidence type="ECO:0007744" key="28">
    <source>
        <dbReference type="PDB" id="5Y3A"/>
    </source>
</evidence>
<evidence type="ECO:0007744" key="29">
    <source>
        <dbReference type="PDB" id="5YK3"/>
    </source>
</evidence>
<evidence type="ECO:0007744" key="30">
    <source>
        <dbReference type="PDB" id="6B9X"/>
    </source>
</evidence>
<evidence type="ECO:0007744" key="31">
    <source>
        <dbReference type="PDB" id="6EHP"/>
    </source>
</evidence>
<evidence type="ECO:0007744" key="32">
    <source>
        <dbReference type="PDB" id="6EHR"/>
    </source>
</evidence>
<evidence type="ECO:0007744" key="33">
    <source>
        <dbReference type="PDB" id="6NZD"/>
    </source>
</evidence>
<evidence type="ECO:0007744" key="34">
    <source>
        <dbReference type="PDB" id="6U62"/>
    </source>
</evidence>
<evidence type="ECO:0007744" key="35">
    <source>
        <dbReference type="PDB" id="6ULG"/>
    </source>
</evidence>
<evidence type="ECO:0007744" key="36">
    <source>
        <dbReference type="PDB" id="6WJ2"/>
    </source>
</evidence>
<evidence type="ECO:0007744" key="37">
    <source>
        <dbReference type="PDB" id="6WJ3"/>
    </source>
</evidence>
<evidence type="ECO:0007744" key="38">
    <source>
        <dbReference type="PDB" id="7T3A"/>
    </source>
</evidence>
<evidence type="ECO:0007744" key="39">
    <source>
        <dbReference type="PDB" id="7T3B"/>
    </source>
</evidence>
<evidence type="ECO:0007744" key="40">
    <source>
        <dbReference type="PDB" id="7T3C"/>
    </source>
</evidence>
<evidence type="ECO:0007744" key="41">
    <source>
        <dbReference type="PDB" id="7UX2"/>
    </source>
</evidence>
<evidence type="ECO:0007744" key="42">
    <source>
        <dbReference type="PDB" id="7UXC"/>
    </source>
</evidence>
<evidence type="ECO:0007744" key="43">
    <source>
        <dbReference type="PDB" id="7UXH"/>
    </source>
</evidence>
<evidence type="ECO:0007744" key="44">
    <source>
        <dbReference type="PDB" id="8DHB"/>
    </source>
</evidence>
<evidence type="ECO:0007829" key="45">
    <source>
        <dbReference type="PDB" id="5X6U"/>
    </source>
</evidence>
<evidence type="ECO:0007829" key="46">
    <source>
        <dbReference type="PDB" id="5X6V"/>
    </source>
</evidence>
<evidence type="ECO:0007829" key="47">
    <source>
        <dbReference type="PDB" id="6B9X"/>
    </source>
</evidence>
<evidence type="ECO:0007829" key="48">
    <source>
        <dbReference type="PDB" id="6ULG"/>
    </source>
</evidence>
<evidence type="ECO:0007829" key="49">
    <source>
        <dbReference type="PDB" id="7UX2"/>
    </source>
</evidence>
<dbReference type="EMBL" id="AF070659">
    <property type="protein sequence ID" value="AAD20965.1"/>
    <property type="molecule type" value="mRNA"/>
</dbReference>
<dbReference type="EMBL" id="AK307086">
    <property type="status" value="NOT_ANNOTATED_CDS"/>
    <property type="molecule type" value="mRNA"/>
</dbReference>
<dbReference type="EMBL" id="AL355388">
    <property type="status" value="NOT_ANNOTATED_CDS"/>
    <property type="molecule type" value="Genomic_DNA"/>
</dbReference>
<dbReference type="EMBL" id="BC024190">
    <property type="protein sequence ID" value="AAH24190.1"/>
    <property type="molecule type" value="mRNA"/>
</dbReference>
<dbReference type="CCDS" id="CCDS1128.1">
    <molecule id="Q9Y2Q5-1"/>
</dbReference>
<dbReference type="CCDS" id="CCDS44243.1">
    <molecule id="Q9Y2Q5-3"/>
</dbReference>
<dbReference type="RefSeq" id="NP_001138736.1">
    <molecule id="Q9Y2Q5-3"/>
    <property type="nucleotide sequence ID" value="NM_001145264.2"/>
</dbReference>
<dbReference type="RefSeq" id="NP_054736.1">
    <molecule id="Q9Y2Q5-1"/>
    <property type="nucleotide sequence ID" value="NM_014017.4"/>
</dbReference>
<dbReference type="PDB" id="5X6U">
    <property type="method" value="X-ray"/>
    <property type="resolution" value="2.40 A"/>
    <property type="chains" value="B=1-125"/>
</dbReference>
<dbReference type="PDB" id="5X6V">
    <property type="method" value="X-ray"/>
    <property type="resolution" value="2.02 A"/>
    <property type="chains" value="B=1-125"/>
</dbReference>
<dbReference type="PDB" id="5Y39">
    <property type="method" value="X-ray"/>
    <property type="resolution" value="2.65 A"/>
    <property type="chains" value="B/G=1-125"/>
</dbReference>
<dbReference type="PDB" id="5Y3A">
    <property type="method" value="X-ray"/>
    <property type="resolution" value="2.90 A"/>
    <property type="chains" value="B/G=1-125"/>
</dbReference>
<dbReference type="PDB" id="5YK3">
    <property type="method" value="X-ray"/>
    <property type="resolution" value="3.01 A"/>
    <property type="chains" value="1/B/G=1-124"/>
</dbReference>
<dbReference type="PDB" id="6B9X">
    <property type="method" value="X-ray"/>
    <property type="resolution" value="1.42 A"/>
    <property type="chains" value="B=1-125"/>
</dbReference>
<dbReference type="PDB" id="6EHP">
    <property type="method" value="X-ray"/>
    <property type="resolution" value="2.30 A"/>
    <property type="chains" value="B=2-125"/>
</dbReference>
<dbReference type="PDB" id="6EHR">
    <property type="method" value="X-ray"/>
    <property type="resolution" value="2.90 A"/>
    <property type="chains" value="B=2-125"/>
</dbReference>
<dbReference type="PDB" id="6NZD">
    <property type="method" value="EM"/>
    <property type="resolution" value="3.60 A"/>
    <property type="chains" value="B=1-125"/>
</dbReference>
<dbReference type="PDB" id="6U62">
    <property type="method" value="EM"/>
    <property type="resolution" value="3.18 A"/>
    <property type="chains" value="E=1-125"/>
</dbReference>
<dbReference type="PDB" id="6ULG">
    <property type="method" value="EM"/>
    <property type="resolution" value="3.31 A"/>
    <property type="chains" value="B=1-125"/>
</dbReference>
<dbReference type="PDB" id="6WJ2">
    <property type="method" value="EM"/>
    <property type="resolution" value="3.20 A"/>
    <property type="chains" value="B=1-125"/>
</dbReference>
<dbReference type="PDB" id="6WJ3">
    <property type="method" value="EM"/>
    <property type="resolution" value="3.90 A"/>
    <property type="chains" value="B=1-125"/>
</dbReference>
<dbReference type="PDB" id="7T3A">
    <property type="method" value="EM"/>
    <property type="resolution" value="4.00 A"/>
    <property type="chains" value="N=1-125"/>
</dbReference>
<dbReference type="PDB" id="7T3B">
    <property type="method" value="EM"/>
    <property type="resolution" value="3.90 A"/>
    <property type="chains" value="G=1-125"/>
</dbReference>
<dbReference type="PDB" id="7T3C">
    <property type="method" value="EM"/>
    <property type="resolution" value="4.00 A"/>
    <property type="chains" value="G/N=1-125"/>
</dbReference>
<dbReference type="PDB" id="7UX2">
    <property type="method" value="EM"/>
    <property type="resolution" value="2.90 A"/>
    <property type="chains" value="E/L=1-125"/>
</dbReference>
<dbReference type="PDB" id="7UXC">
    <property type="method" value="EM"/>
    <property type="resolution" value="3.20 A"/>
    <property type="chains" value="G/N=1-125"/>
</dbReference>
<dbReference type="PDB" id="7UXH">
    <property type="method" value="EM"/>
    <property type="resolution" value="3.20 A"/>
    <property type="chains" value="I/P/Y/f=1-125"/>
</dbReference>
<dbReference type="PDB" id="8DHB">
    <property type="method" value="EM"/>
    <property type="resolution" value="3.53 A"/>
    <property type="chains" value="D=1-125"/>
</dbReference>
<dbReference type="PDBsum" id="5X6U"/>
<dbReference type="PDBsum" id="5X6V"/>
<dbReference type="PDBsum" id="5Y39"/>
<dbReference type="PDBsum" id="5Y3A"/>
<dbReference type="PDBsum" id="5YK3"/>
<dbReference type="PDBsum" id="6B9X"/>
<dbReference type="PDBsum" id="6EHP"/>
<dbReference type="PDBsum" id="6EHR"/>
<dbReference type="PDBsum" id="6NZD"/>
<dbReference type="PDBsum" id="6U62"/>
<dbReference type="PDBsum" id="6ULG"/>
<dbReference type="PDBsum" id="6WJ2"/>
<dbReference type="PDBsum" id="6WJ3"/>
<dbReference type="PDBsum" id="7T3A"/>
<dbReference type="PDBsum" id="7T3B"/>
<dbReference type="PDBsum" id="7T3C"/>
<dbReference type="PDBsum" id="7UX2"/>
<dbReference type="PDBsum" id="7UXC"/>
<dbReference type="PDBsum" id="7UXH"/>
<dbReference type="PDBsum" id="8DHB"/>
<dbReference type="BMRB" id="Q9Y2Q5"/>
<dbReference type="EMDB" id="EMD-0554"/>
<dbReference type="EMDB" id="EMD-20660"/>
<dbReference type="EMDB" id="EMD-20814"/>
<dbReference type="EMDB" id="EMD-21686"/>
<dbReference type="EMDB" id="EMD-21687"/>
<dbReference type="EMDB" id="EMD-25652"/>
<dbReference type="EMDB" id="EMD-25653"/>
<dbReference type="EMDB" id="EMD-25654"/>
<dbReference type="EMDB" id="EMD-26846"/>
<dbReference type="EMDB" id="EMD-26857"/>
<dbReference type="EMDB" id="EMD-26861"/>
<dbReference type="EMDB" id="EMD-27435"/>
<dbReference type="SMR" id="Q9Y2Q5"/>
<dbReference type="BioGRID" id="118783">
    <property type="interactions" value="133"/>
</dbReference>
<dbReference type="ComplexPortal" id="CPX-4741">
    <property type="entry name" value="Ragulator complex"/>
</dbReference>
<dbReference type="CORUM" id="Q9Y2Q5"/>
<dbReference type="DIP" id="DIP-57000N"/>
<dbReference type="FunCoup" id="Q9Y2Q5">
    <property type="interactions" value="833"/>
</dbReference>
<dbReference type="IntAct" id="Q9Y2Q5">
    <property type="interactions" value="57"/>
</dbReference>
<dbReference type="MINT" id="Q9Y2Q5"/>
<dbReference type="STRING" id="9606.ENSP00000357288"/>
<dbReference type="iPTMnet" id="Q9Y2Q5"/>
<dbReference type="PhosphoSitePlus" id="Q9Y2Q5"/>
<dbReference type="SwissPalm" id="Q9Y2Q5"/>
<dbReference type="BioMuta" id="LAMTOR2"/>
<dbReference type="DMDM" id="12585246"/>
<dbReference type="OGP" id="Q9Y2Q5"/>
<dbReference type="jPOST" id="Q9Y2Q5"/>
<dbReference type="MassIVE" id="Q9Y2Q5"/>
<dbReference type="PaxDb" id="9606-ENSP00000357288"/>
<dbReference type="PeptideAtlas" id="Q9Y2Q5"/>
<dbReference type="ProteomicsDB" id="85869">
    <molecule id="Q9Y2Q5-1"/>
</dbReference>
<dbReference type="ProteomicsDB" id="85870">
    <molecule id="Q9Y2Q5-2"/>
</dbReference>
<dbReference type="ProteomicsDB" id="85871">
    <molecule id="Q9Y2Q5-3"/>
</dbReference>
<dbReference type="Pumba" id="Q9Y2Q5"/>
<dbReference type="TopDownProteomics" id="Q9Y2Q5-1">
    <molecule id="Q9Y2Q5-1"/>
</dbReference>
<dbReference type="TopDownProteomics" id="Q9Y2Q5-2">
    <molecule id="Q9Y2Q5-2"/>
</dbReference>
<dbReference type="TopDownProteomics" id="Q9Y2Q5-3">
    <molecule id="Q9Y2Q5-3"/>
</dbReference>
<dbReference type="Antibodypedia" id="1218">
    <property type="antibodies" value="97 antibodies from 24 providers"/>
</dbReference>
<dbReference type="DNASU" id="28956"/>
<dbReference type="Ensembl" id="ENST00000368302.3">
    <molecule id="Q9Y2Q5-2"/>
    <property type="protein sequence ID" value="ENSP00000357285.3"/>
    <property type="gene ID" value="ENSG00000116586.12"/>
</dbReference>
<dbReference type="Ensembl" id="ENST00000368304.9">
    <molecule id="Q9Y2Q5-3"/>
    <property type="protein sequence ID" value="ENSP00000357287.5"/>
    <property type="gene ID" value="ENSG00000116586.12"/>
</dbReference>
<dbReference type="Ensembl" id="ENST00000368305.9">
    <molecule id="Q9Y2Q5-1"/>
    <property type="protein sequence ID" value="ENSP00000357288.4"/>
    <property type="gene ID" value="ENSG00000116586.12"/>
</dbReference>
<dbReference type="GeneID" id="28956"/>
<dbReference type="KEGG" id="hsa:28956"/>
<dbReference type="MANE-Select" id="ENST00000368305.9">
    <property type="protein sequence ID" value="ENSP00000357288.4"/>
    <property type="RefSeq nucleotide sequence ID" value="NM_014017.4"/>
    <property type="RefSeq protein sequence ID" value="NP_054736.1"/>
</dbReference>
<dbReference type="UCSC" id="uc001fnb.4">
    <molecule id="Q9Y2Q5-1"/>
    <property type="organism name" value="human"/>
</dbReference>
<dbReference type="AGR" id="HGNC:29796"/>
<dbReference type="CTD" id="28956"/>
<dbReference type="DisGeNET" id="28956"/>
<dbReference type="GeneCards" id="LAMTOR2"/>
<dbReference type="HGNC" id="HGNC:29796">
    <property type="gene designation" value="LAMTOR2"/>
</dbReference>
<dbReference type="HPA" id="ENSG00000116586">
    <property type="expression patterns" value="Low tissue specificity"/>
</dbReference>
<dbReference type="MalaCards" id="LAMTOR2"/>
<dbReference type="MIM" id="610389">
    <property type="type" value="gene"/>
</dbReference>
<dbReference type="MIM" id="610798">
    <property type="type" value="phenotype"/>
</dbReference>
<dbReference type="neXtProt" id="NX_Q9Y2Q5"/>
<dbReference type="OpenTargets" id="ENSG00000116586"/>
<dbReference type="Orphanet" id="90023">
    <property type="disease" value="Primary immunodeficiency syndrome due to P14/LAMTOR2 deficiency"/>
</dbReference>
<dbReference type="PharmGKB" id="PA164725527"/>
<dbReference type="VEuPathDB" id="HostDB:ENSG00000116586"/>
<dbReference type="eggNOG" id="KOG4107">
    <property type="taxonomic scope" value="Eukaryota"/>
</dbReference>
<dbReference type="GeneTree" id="ENSGT00390000006100"/>
<dbReference type="HOGENOM" id="CLU_141118_0_0_1"/>
<dbReference type="InParanoid" id="Q9Y2Q5"/>
<dbReference type="OMA" id="WAAYEKN"/>
<dbReference type="OrthoDB" id="271745at2759"/>
<dbReference type="PAN-GO" id="Q9Y2Q5">
    <property type="GO annotations" value="3 GO annotations based on evolutionary models"/>
</dbReference>
<dbReference type="PhylomeDB" id="Q9Y2Q5"/>
<dbReference type="TreeFam" id="TF313929"/>
<dbReference type="PathwayCommons" id="Q9Y2Q5"/>
<dbReference type="Reactome" id="R-HSA-1632852">
    <property type="pathway name" value="Macroautophagy"/>
</dbReference>
<dbReference type="Reactome" id="R-HSA-165159">
    <property type="pathway name" value="MTOR signalling"/>
</dbReference>
<dbReference type="Reactome" id="R-HSA-166208">
    <property type="pathway name" value="mTORC1-mediated signalling"/>
</dbReference>
<dbReference type="Reactome" id="R-HSA-380972">
    <property type="pathway name" value="Energy dependent regulation of mTOR by LKB1-AMPK"/>
</dbReference>
<dbReference type="Reactome" id="R-HSA-5628897">
    <property type="pathway name" value="TP53 Regulates Metabolic Genes"/>
</dbReference>
<dbReference type="Reactome" id="R-HSA-5674135">
    <property type="pathway name" value="MAP2K and MAPK activation"/>
</dbReference>
<dbReference type="Reactome" id="R-HSA-6798695">
    <property type="pathway name" value="Neutrophil degranulation"/>
</dbReference>
<dbReference type="Reactome" id="R-HSA-8943724">
    <property type="pathway name" value="Regulation of PTEN gene transcription"/>
</dbReference>
<dbReference type="Reactome" id="R-HSA-9639288">
    <property type="pathway name" value="Amino acids regulate mTORC1"/>
</dbReference>
<dbReference type="SignaLink" id="Q9Y2Q5"/>
<dbReference type="SIGNOR" id="Q9Y2Q5"/>
<dbReference type="BioGRID-ORCS" id="28956">
    <property type="hits" value="425 hits in 1169 CRISPR screens"/>
</dbReference>
<dbReference type="ChiTaRS" id="LAMTOR2">
    <property type="organism name" value="human"/>
</dbReference>
<dbReference type="GenomeRNAi" id="28956"/>
<dbReference type="Pharos" id="Q9Y2Q5">
    <property type="development level" value="Tbio"/>
</dbReference>
<dbReference type="PRO" id="PR:Q9Y2Q5"/>
<dbReference type="Proteomes" id="UP000005640">
    <property type="component" value="Chromosome 1"/>
</dbReference>
<dbReference type="RNAct" id="Q9Y2Q5">
    <property type="molecule type" value="protein"/>
</dbReference>
<dbReference type="Bgee" id="ENSG00000116586">
    <property type="expression patterns" value="Expressed in mucosa of transverse colon and 188 other cell types or tissues"/>
</dbReference>
<dbReference type="GO" id="GO:0010008">
    <property type="term" value="C:endosome membrane"/>
    <property type="evidence" value="ECO:0000304"/>
    <property type="project" value="Reactome"/>
</dbReference>
<dbReference type="GO" id="GO:1990877">
    <property type="term" value="C:FNIP-folliculin RagC/D GAP"/>
    <property type="evidence" value="ECO:0000314"/>
    <property type="project" value="UniProtKB"/>
</dbReference>
<dbReference type="GO" id="GO:0005770">
    <property type="term" value="C:late endosome"/>
    <property type="evidence" value="ECO:0000250"/>
    <property type="project" value="UniProtKB"/>
</dbReference>
<dbReference type="GO" id="GO:0031902">
    <property type="term" value="C:late endosome membrane"/>
    <property type="evidence" value="ECO:0000303"/>
    <property type="project" value="ComplexPortal"/>
</dbReference>
<dbReference type="GO" id="GO:0005765">
    <property type="term" value="C:lysosomal membrane"/>
    <property type="evidence" value="ECO:0000314"/>
    <property type="project" value="UniProtKB"/>
</dbReference>
<dbReference type="GO" id="GO:0005886">
    <property type="term" value="C:plasma membrane"/>
    <property type="evidence" value="ECO:0000304"/>
    <property type="project" value="Reactome"/>
</dbReference>
<dbReference type="GO" id="GO:0071986">
    <property type="term" value="C:Ragulator complex"/>
    <property type="evidence" value="ECO:0000314"/>
    <property type="project" value="UniProtKB"/>
</dbReference>
<dbReference type="GO" id="GO:0035579">
    <property type="term" value="C:specific granule membrane"/>
    <property type="evidence" value="ECO:0000304"/>
    <property type="project" value="Reactome"/>
</dbReference>
<dbReference type="GO" id="GO:0070821">
    <property type="term" value="C:tertiary granule membrane"/>
    <property type="evidence" value="ECO:0000304"/>
    <property type="project" value="Reactome"/>
</dbReference>
<dbReference type="GO" id="GO:0005085">
    <property type="term" value="F:guanyl-nucleotide exchange factor activity"/>
    <property type="evidence" value="ECO:0007669"/>
    <property type="project" value="InterPro"/>
</dbReference>
<dbReference type="GO" id="GO:0060090">
    <property type="term" value="F:molecular adaptor activity"/>
    <property type="evidence" value="ECO:0007669"/>
    <property type="project" value="InterPro"/>
</dbReference>
<dbReference type="GO" id="GO:0071230">
    <property type="term" value="P:cellular response to amino acid stimulus"/>
    <property type="evidence" value="ECO:0000314"/>
    <property type="project" value="ComplexPortal"/>
</dbReference>
<dbReference type="GO" id="GO:0010761">
    <property type="term" value="P:fibroblast migration"/>
    <property type="evidence" value="ECO:0007669"/>
    <property type="project" value="Ensembl"/>
</dbReference>
<dbReference type="GO" id="GO:0043410">
    <property type="term" value="P:positive regulation of MAPK cascade"/>
    <property type="evidence" value="ECO:0007669"/>
    <property type="project" value="Ensembl"/>
</dbReference>
<dbReference type="GO" id="GO:0032008">
    <property type="term" value="P:positive regulation of TOR signaling"/>
    <property type="evidence" value="ECO:0000315"/>
    <property type="project" value="UniProtKB"/>
</dbReference>
<dbReference type="GO" id="GO:1904263">
    <property type="term" value="P:positive regulation of TORC1 signaling"/>
    <property type="evidence" value="ECO:0000314"/>
    <property type="project" value="UniProtKB"/>
</dbReference>
<dbReference type="GO" id="GO:0008104">
    <property type="term" value="P:protein localization"/>
    <property type="evidence" value="ECO:0000315"/>
    <property type="project" value="UniProtKB"/>
</dbReference>
<dbReference type="GO" id="GO:1902414">
    <property type="term" value="P:protein localization to cell junction"/>
    <property type="evidence" value="ECO:0007669"/>
    <property type="project" value="Ensembl"/>
</dbReference>
<dbReference type="GO" id="GO:0001558">
    <property type="term" value="P:regulation of cell growth"/>
    <property type="evidence" value="ECO:0000315"/>
    <property type="project" value="UniProtKB"/>
</dbReference>
<dbReference type="GO" id="GO:0150116">
    <property type="term" value="P:regulation of cell-substrate junction organization"/>
    <property type="evidence" value="ECO:0000315"/>
    <property type="project" value="MGI"/>
</dbReference>
<dbReference type="GO" id="GO:0038202">
    <property type="term" value="P:TORC1 signaling"/>
    <property type="evidence" value="ECO:0000303"/>
    <property type="project" value="ComplexPortal"/>
</dbReference>
<dbReference type="FunFam" id="3.30.450.30:FF:000004">
    <property type="entry name" value="ragulator complex protein LAMTOR2"/>
    <property type="match status" value="1"/>
</dbReference>
<dbReference type="Gene3D" id="3.30.450.30">
    <property type="entry name" value="Dynein light chain 2a, cytoplasmic"/>
    <property type="match status" value="1"/>
</dbReference>
<dbReference type="InterPro" id="IPR037587">
    <property type="entry name" value="LAMTOR2-like"/>
</dbReference>
<dbReference type="InterPro" id="IPR004942">
    <property type="entry name" value="Roadblock/LAMTOR2_dom"/>
</dbReference>
<dbReference type="PANTHER" id="PTHR13323">
    <property type="entry name" value="LATE ENDOSOMAL/LYSOSOMAL MP1 INTERACTING PROTEIN"/>
    <property type="match status" value="1"/>
</dbReference>
<dbReference type="Pfam" id="PF03259">
    <property type="entry name" value="Robl_LC7"/>
    <property type="match status" value="1"/>
</dbReference>
<dbReference type="SMART" id="SM00960">
    <property type="entry name" value="Robl_LC7"/>
    <property type="match status" value="1"/>
</dbReference>
<dbReference type="SUPFAM" id="SSF103196">
    <property type="entry name" value="Roadblock/LC7 domain"/>
    <property type="match status" value="1"/>
</dbReference>